<gene>
    <name evidence="1" type="primary">hscA</name>
    <name type="ordered locus">HS_0285</name>
</gene>
<comment type="function">
    <text evidence="1">Chaperone involved in the maturation of iron-sulfur cluster-containing proteins. Has a low intrinsic ATPase activity which is markedly stimulated by HscB.</text>
</comment>
<comment type="similarity">
    <text evidence="1">Belongs to the heat shock protein 70 family.</text>
</comment>
<dbReference type="EMBL" id="CP000436">
    <property type="protein sequence ID" value="ABI24563.1"/>
    <property type="molecule type" value="Genomic_DNA"/>
</dbReference>
<dbReference type="SMR" id="Q0I1K8"/>
<dbReference type="KEGG" id="hso:HS_0285"/>
<dbReference type="eggNOG" id="COG0443">
    <property type="taxonomic scope" value="Bacteria"/>
</dbReference>
<dbReference type="HOGENOM" id="CLU_005965_2_1_6"/>
<dbReference type="GO" id="GO:0005524">
    <property type="term" value="F:ATP binding"/>
    <property type="evidence" value="ECO:0007669"/>
    <property type="project" value="UniProtKB-KW"/>
</dbReference>
<dbReference type="GO" id="GO:0016887">
    <property type="term" value="F:ATP hydrolysis activity"/>
    <property type="evidence" value="ECO:0007669"/>
    <property type="project" value="UniProtKB-UniRule"/>
</dbReference>
<dbReference type="GO" id="GO:0140662">
    <property type="term" value="F:ATP-dependent protein folding chaperone"/>
    <property type="evidence" value="ECO:0007669"/>
    <property type="project" value="InterPro"/>
</dbReference>
<dbReference type="GO" id="GO:0051082">
    <property type="term" value="F:unfolded protein binding"/>
    <property type="evidence" value="ECO:0007669"/>
    <property type="project" value="InterPro"/>
</dbReference>
<dbReference type="GO" id="GO:0016226">
    <property type="term" value="P:iron-sulfur cluster assembly"/>
    <property type="evidence" value="ECO:0007669"/>
    <property type="project" value="InterPro"/>
</dbReference>
<dbReference type="CDD" id="cd10236">
    <property type="entry name" value="ASKHA_NBD_HSP70_HscA"/>
    <property type="match status" value="1"/>
</dbReference>
<dbReference type="FunFam" id="3.30.420.40:FF:000046">
    <property type="entry name" value="Chaperone protein HscA"/>
    <property type="match status" value="1"/>
</dbReference>
<dbReference type="FunFam" id="2.60.34.10:FF:000005">
    <property type="entry name" value="Chaperone protein HscA homolog"/>
    <property type="match status" value="1"/>
</dbReference>
<dbReference type="FunFam" id="3.30.420.40:FF:000020">
    <property type="entry name" value="Chaperone protein HscA homolog"/>
    <property type="match status" value="1"/>
</dbReference>
<dbReference type="Gene3D" id="1.20.1270.10">
    <property type="match status" value="1"/>
</dbReference>
<dbReference type="Gene3D" id="3.30.420.40">
    <property type="match status" value="2"/>
</dbReference>
<dbReference type="Gene3D" id="3.90.640.10">
    <property type="entry name" value="Actin, Chain A, domain 4"/>
    <property type="match status" value="1"/>
</dbReference>
<dbReference type="Gene3D" id="2.60.34.10">
    <property type="entry name" value="Substrate Binding Domain Of DNAk, Chain A, domain 1"/>
    <property type="match status" value="1"/>
</dbReference>
<dbReference type="HAMAP" id="MF_00679">
    <property type="entry name" value="HscA"/>
    <property type="match status" value="1"/>
</dbReference>
<dbReference type="InterPro" id="IPR043129">
    <property type="entry name" value="ATPase_NBD"/>
</dbReference>
<dbReference type="InterPro" id="IPR018181">
    <property type="entry name" value="Heat_shock_70_CS"/>
</dbReference>
<dbReference type="InterPro" id="IPR042039">
    <property type="entry name" value="HscA_NBD"/>
</dbReference>
<dbReference type="InterPro" id="IPR029048">
    <property type="entry name" value="HSP70_C_sf"/>
</dbReference>
<dbReference type="InterPro" id="IPR029047">
    <property type="entry name" value="HSP70_peptide-bd_sf"/>
</dbReference>
<dbReference type="InterPro" id="IPR013126">
    <property type="entry name" value="Hsp_70_fam"/>
</dbReference>
<dbReference type="InterPro" id="IPR010236">
    <property type="entry name" value="ISC_FeS_clus_asmbl_HscA"/>
</dbReference>
<dbReference type="NCBIfam" id="TIGR01991">
    <property type="entry name" value="HscA"/>
    <property type="match status" value="1"/>
</dbReference>
<dbReference type="NCBIfam" id="NF003520">
    <property type="entry name" value="PRK05183.1"/>
    <property type="match status" value="1"/>
</dbReference>
<dbReference type="PANTHER" id="PTHR19375">
    <property type="entry name" value="HEAT SHOCK PROTEIN 70KDA"/>
    <property type="match status" value="1"/>
</dbReference>
<dbReference type="Pfam" id="PF00012">
    <property type="entry name" value="HSP70"/>
    <property type="match status" value="1"/>
</dbReference>
<dbReference type="PRINTS" id="PR00301">
    <property type="entry name" value="HEATSHOCK70"/>
</dbReference>
<dbReference type="SUPFAM" id="SSF53067">
    <property type="entry name" value="Actin-like ATPase domain"/>
    <property type="match status" value="2"/>
</dbReference>
<dbReference type="SUPFAM" id="SSF100934">
    <property type="entry name" value="Heat shock protein 70kD (HSP70), C-terminal subdomain"/>
    <property type="match status" value="1"/>
</dbReference>
<dbReference type="SUPFAM" id="SSF100920">
    <property type="entry name" value="Heat shock protein 70kD (HSP70), peptide-binding domain"/>
    <property type="match status" value="1"/>
</dbReference>
<dbReference type="PROSITE" id="PS00297">
    <property type="entry name" value="HSP70_1"/>
    <property type="match status" value="1"/>
</dbReference>
<dbReference type="PROSITE" id="PS00329">
    <property type="entry name" value="HSP70_2"/>
    <property type="match status" value="1"/>
</dbReference>
<dbReference type="PROSITE" id="PS01036">
    <property type="entry name" value="HSP70_3"/>
    <property type="match status" value="1"/>
</dbReference>
<protein>
    <recommendedName>
        <fullName evidence="1">Chaperone protein HscA homolog</fullName>
    </recommendedName>
</protein>
<proteinExistence type="inferred from homology"/>
<feature type="chain" id="PRO_1000044861" description="Chaperone protein HscA homolog">
    <location>
        <begin position="1"/>
        <end position="616"/>
    </location>
</feature>
<sequence length="616" mass="66982">MALLQIAEPGQSAAPHQHKLAVGIDLGTTNSLVAAVRSGSSEVLRDEQDRLLIPSIVHLTEDQVIVGYEAGKLASQDPQNTIISVKRLIGRSCTDVQQRYPNLPYQFSATENGLPLLKTRRGLLSPVEISAEILKKLTALAEQRLGGELTGAVITVPAYFDDAQRQSTKDAAKLAGLKVLRLLNEPTAAAIAYGLDSGQEGVIAVYDLGGGTFDVSILRLSKGVFEVLATGGDTALGGDDFDHLLAEWIVKKSTVAPQNDREKRQLIEVANQVKVALTTNDKIRISYAEQNLEITRDEFNSLISGLVKRSLLACRRTLKDANLTPSDILEVVMVGGSTRIPYVREQVGEFFQCTPLTSIDPDKVVALGAAIQADILVGNKPDSEMLLLDVIPLSLGIETMGGLVEKIIPRNTTIPVARAQEFTTFKDGQTAMSVHVLQGEREMVTDCRSLARFTLRGIPAMVAGAARIRVTYQVDADGLLSVTAVEKSTGVQASTQVKPSYGLTDDEIANMLKSSMEHAKEDIQTRLLTEQRVDATRVIESVYSALQQDEDLLDDNELSAVKNALVSLQKLIQEEDSLAIKQGIKMLDQATQEFASRRMDKSIRRALSGQHIEHIK</sequence>
<reference key="1">
    <citation type="journal article" date="2007" name="J. Bacteriol.">
        <title>Complete genome sequence of Haemophilus somnus (Histophilus somni) strain 129Pt and comparison to Haemophilus ducreyi 35000HP and Haemophilus influenzae Rd.</title>
        <authorList>
            <person name="Challacombe J.F."/>
            <person name="Duncan A.J."/>
            <person name="Brettin T.S."/>
            <person name="Bruce D."/>
            <person name="Chertkov O."/>
            <person name="Detter J.C."/>
            <person name="Han C.S."/>
            <person name="Misra M."/>
            <person name="Richardson P."/>
            <person name="Tapia R."/>
            <person name="Thayer N."/>
            <person name="Xie G."/>
            <person name="Inzana T.J."/>
        </authorList>
    </citation>
    <scope>NUCLEOTIDE SEQUENCE [LARGE SCALE GENOMIC DNA]</scope>
    <source>
        <strain>129Pt</strain>
    </source>
</reference>
<keyword id="KW-0067">ATP-binding</keyword>
<keyword id="KW-0143">Chaperone</keyword>
<keyword id="KW-0547">Nucleotide-binding</keyword>
<accession>Q0I1K8</accession>
<name>HSCA_HISS1</name>
<organism>
    <name type="scientific">Histophilus somni (strain 129Pt)</name>
    <name type="common">Haemophilus somnus</name>
    <dbReference type="NCBI Taxonomy" id="205914"/>
    <lineage>
        <taxon>Bacteria</taxon>
        <taxon>Pseudomonadati</taxon>
        <taxon>Pseudomonadota</taxon>
        <taxon>Gammaproteobacteria</taxon>
        <taxon>Pasteurellales</taxon>
        <taxon>Pasteurellaceae</taxon>
        <taxon>Histophilus</taxon>
    </lineage>
</organism>
<evidence type="ECO:0000255" key="1">
    <source>
        <dbReference type="HAMAP-Rule" id="MF_00679"/>
    </source>
</evidence>